<sequence>MSEKNAYAKSGVDVEAGYEVVERIKKHVARTERAGVMGVLGGFGGMFDLSKTGVKEPVLVSGTDGVGTKLMLAIKYDKHDTIGQDCVAMCVNDIIAAGAEPLYFLDYIATGKNNPVKLEEVVSGVAEGCVQAGVALIGGETAEMPGMYGEDDYDLAGFAVGVAEKSQIIDGSKVKEGDILLGLASSGIHSNGYSLVRRVFADYTGKELLPELEGKQLKDVLLEPTRIYVKAALPLIKEELVNGIGHITGGGFIENVPRMFADDLAAEIDEDKVPVLPIFKALEKYGDIKHEEMFEIFNMGVGLMLAVSPENVNRVKELLDEPVYEIGRIIKKADASVVIK</sequence>
<dbReference type="EC" id="6.3.3.1" evidence="1"/>
<dbReference type="EMBL" id="CP000829">
    <property type="protein sequence ID" value="ACI60386.1"/>
    <property type="molecule type" value="Genomic_DNA"/>
</dbReference>
<dbReference type="SMR" id="B5XJ18"/>
<dbReference type="KEGG" id="soz:Spy49_0023"/>
<dbReference type="HOGENOM" id="CLU_047116_0_0_9"/>
<dbReference type="UniPathway" id="UPA00074">
    <property type="reaction ID" value="UER00129"/>
</dbReference>
<dbReference type="Proteomes" id="UP000001039">
    <property type="component" value="Chromosome"/>
</dbReference>
<dbReference type="GO" id="GO:0005829">
    <property type="term" value="C:cytosol"/>
    <property type="evidence" value="ECO:0007669"/>
    <property type="project" value="TreeGrafter"/>
</dbReference>
<dbReference type="GO" id="GO:0005524">
    <property type="term" value="F:ATP binding"/>
    <property type="evidence" value="ECO:0007669"/>
    <property type="project" value="UniProtKB-KW"/>
</dbReference>
<dbReference type="GO" id="GO:0004637">
    <property type="term" value="F:phosphoribosylamine-glycine ligase activity"/>
    <property type="evidence" value="ECO:0007669"/>
    <property type="project" value="TreeGrafter"/>
</dbReference>
<dbReference type="GO" id="GO:0004641">
    <property type="term" value="F:phosphoribosylformylglycinamidine cyclo-ligase activity"/>
    <property type="evidence" value="ECO:0007669"/>
    <property type="project" value="UniProtKB-UniRule"/>
</dbReference>
<dbReference type="GO" id="GO:0006189">
    <property type="term" value="P:'de novo' IMP biosynthetic process"/>
    <property type="evidence" value="ECO:0007669"/>
    <property type="project" value="UniProtKB-UniRule"/>
</dbReference>
<dbReference type="GO" id="GO:0046084">
    <property type="term" value="P:adenine biosynthetic process"/>
    <property type="evidence" value="ECO:0007669"/>
    <property type="project" value="TreeGrafter"/>
</dbReference>
<dbReference type="CDD" id="cd02196">
    <property type="entry name" value="PurM"/>
    <property type="match status" value="1"/>
</dbReference>
<dbReference type="FunFam" id="3.30.1330.10:FF:000001">
    <property type="entry name" value="Phosphoribosylformylglycinamidine cyclo-ligase"/>
    <property type="match status" value="1"/>
</dbReference>
<dbReference type="FunFam" id="3.90.650.10:FF:000011">
    <property type="entry name" value="Phosphoribosylformylglycinamidine cyclo-ligase"/>
    <property type="match status" value="1"/>
</dbReference>
<dbReference type="Gene3D" id="3.90.650.10">
    <property type="entry name" value="PurM-like C-terminal domain"/>
    <property type="match status" value="1"/>
</dbReference>
<dbReference type="Gene3D" id="3.30.1330.10">
    <property type="entry name" value="PurM-like, N-terminal domain"/>
    <property type="match status" value="1"/>
</dbReference>
<dbReference type="HAMAP" id="MF_00741">
    <property type="entry name" value="AIRS"/>
    <property type="match status" value="1"/>
</dbReference>
<dbReference type="InterPro" id="IPR010918">
    <property type="entry name" value="PurM-like_C_dom"/>
</dbReference>
<dbReference type="InterPro" id="IPR036676">
    <property type="entry name" value="PurM-like_C_sf"/>
</dbReference>
<dbReference type="InterPro" id="IPR016188">
    <property type="entry name" value="PurM-like_N"/>
</dbReference>
<dbReference type="InterPro" id="IPR036921">
    <property type="entry name" value="PurM-like_N_sf"/>
</dbReference>
<dbReference type="InterPro" id="IPR004733">
    <property type="entry name" value="PurM_cligase"/>
</dbReference>
<dbReference type="NCBIfam" id="TIGR00878">
    <property type="entry name" value="purM"/>
    <property type="match status" value="1"/>
</dbReference>
<dbReference type="PANTHER" id="PTHR10520:SF12">
    <property type="entry name" value="TRIFUNCTIONAL PURINE BIOSYNTHETIC PROTEIN ADENOSINE-3"/>
    <property type="match status" value="1"/>
</dbReference>
<dbReference type="PANTHER" id="PTHR10520">
    <property type="entry name" value="TRIFUNCTIONAL PURINE BIOSYNTHETIC PROTEIN ADENOSINE-3-RELATED"/>
    <property type="match status" value="1"/>
</dbReference>
<dbReference type="Pfam" id="PF00586">
    <property type="entry name" value="AIRS"/>
    <property type="match status" value="1"/>
</dbReference>
<dbReference type="Pfam" id="PF02769">
    <property type="entry name" value="AIRS_C"/>
    <property type="match status" value="1"/>
</dbReference>
<dbReference type="SUPFAM" id="SSF56042">
    <property type="entry name" value="PurM C-terminal domain-like"/>
    <property type="match status" value="1"/>
</dbReference>
<dbReference type="SUPFAM" id="SSF55326">
    <property type="entry name" value="PurM N-terminal domain-like"/>
    <property type="match status" value="1"/>
</dbReference>
<name>PUR5_STRPZ</name>
<comment type="catalytic activity">
    <reaction evidence="1">
        <text>2-formamido-N(1)-(5-O-phospho-beta-D-ribosyl)acetamidine + ATP = 5-amino-1-(5-phospho-beta-D-ribosyl)imidazole + ADP + phosphate + H(+)</text>
        <dbReference type="Rhea" id="RHEA:23032"/>
        <dbReference type="ChEBI" id="CHEBI:15378"/>
        <dbReference type="ChEBI" id="CHEBI:30616"/>
        <dbReference type="ChEBI" id="CHEBI:43474"/>
        <dbReference type="ChEBI" id="CHEBI:137981"/>
        <dbReference type="ChEBI" id="CHEBI:147287"/>
        <dbReference type="ChEBI" id="CHEBI:456216"/>
        <dbReference type="EC" id="6.3.3.1"/>
    </reaction>
</comment>
<comment type="pathway">
    <text evidence="1">Purine metabolism; IMP biosynthesis via de novo pathway; 5-amino-1-(5-phospho-D-ribosyl)imidazole from N(2)-formyl-N(1)-(5-phospho-D-ribosyl)glycinamide: step 2/2.</text>
</comment>
<comment type="subcellular location">
    <subcellularLocation>
        <location evidence="1">Cytoplasm</location>
    </subcellularLocation>
</comment>
<comment type="similarity">
    <text evidence="1">Belongs to the AIR synthase family.</text>
</comment>
<proteinExistence type="inferred from homology"/>
<gene>
    <name evidence="1" type="primary">purM</name>
    <name type="ordered locus">Spy49_0023</name>
</gene>
<organism>
    <name type="scientific">Streptococcus pyogenes serotype M49 (strain NZ131)</name>
    <dbReference type="NCBI Taxonomy" id="471876"/>
    <lineage>
        <taxon>Bacteria</taxon>
        <taxon>Bacillati</taxon>
        <taxon>Bacillota</taxon>
        <taxon>Bacilli</taxon>
        <taxon>Lactobacillales</taxon>
        <taxon>Streptococcaceae</taxon>
        <taxon>Streptococcus</taxon>
    </lineage>
</organism>
<reference key="1">
    <citation type="journal article" date="2008" name="J. Bacteriol.">
        <title>Genome sequence of a nephritogenic and highly transformable M49 strain of Streptococcus pyogenes.</title>
        <authorList>
            <person name="McShan W.M."/>
            <person name="Ferretti J.J."/>
            <person name="Karasawa T."/>
            <person name="Suvorov A.N."/>
            <person name="Lin S."/>
            <person name="Qin B."/>
            <person name="Jia H."/>
            <person name="Kenton S."/>
            <person name="Najar F."/>
            <person name="Wu H."/>
            <person name="Scott J."/>
            <person name="Roe B.A."/>
            <person name="Savic D.J."/>
        </authorList>
    </citation>
    <scope>NUCLEOTIDE SEQUENCE [LARGE SCALE GENOMIC DNA]</scope>
    <source>
        <strain>NZ131</strain>
    </source>
</reference>
<protein>
    <recommendedName>
        <fullName evidence="1">Phosphoribosylformylglycinamidine cyclo-ligase</fullName>
        <ecNumber evidence="1">6.3.3.1</ecNumber>
    </recommendedName>
    <alternativeName>
        <fullName evidence="1">AIR synthase</fullName>
    </alternativeName>
    <alternativeName>
        <fullName evidence="1">AIRS</fullName>
    </alternativeName>
    <alternativeName>
        <fullName evidence="1">Phosphoribosyl-aminoimidazole synthetase</fullName>
    </alternativeName>
</protein>
<feature type="chain" id="PRO_1000193050" description="Phosphoribosylformylglycinamidine cyclo-ligase">
    <location>
        <begin position="1"/>
        <end position="340"/>
    </location>
</feature>
<accession>B5XJ18</accession>
<keyword id="KW-0067">ATP-binding</keyword>
<keyword id="KW-0963">Cytoplasm</keyword>
<keyword id="KW-0436">Ligase</keyword>
<keyword id="KW-0547">Nucleotide-binding</keyword>
<keyword id="KW-0658">Purine biosynthesis</keyword>
<evidence type="ECO:0000255" key="1">
    <source>
        <dbReference type="HAMAP-Rule" id="MF_00741"/>
    </source>
</evidence>